<reference key="1">
    <citation type="submission" date="2007-02" db="EMBL/GenBank/DDBJ databases">
        <title>Complete sequence of chromosome of Shewanella baltica OS155.</title>
        <authorList>
            <consortium name="US DOE Joint Genome Institute"/>
            <person name="Copeland A."/>
            <person name="Lucas S."/>
            <person name="Lapidus A."/>
            <person name="Barry K."/>
            <person name="Detter J.C."/>
            <person name="Glavina del Rio T."/>
            <person name="Hammon N."/>
            <person name="Israni S."/>
            <person name="Dalin E."/>
            <person name="Tice H."/>
            <person name="Pitluck S."/>
            <person name="Sims D.R."/>
            <person name="Brettin T."/>
            <person name="Bruce D."/>
            <person name="Han C."/>
            <person name="Tapia R."/>
            <person name="Brainard J."/>
            <person name="Schmutz J."/>
            <person name="Larimer F."/>
            <person name="Land M."/>
            <person name="Hauser L."/>
            <person name="Kyrpides N."/>
            <person name="Mikhailova N."/>
            <person name="Brettar I."/>
            <person name="Klappenbach J."/>
            <person name="Konstantinidis K."/>
            <person name="Rodrigues J."/>
            <person name="Tiedje J."/>
            <person name="Richardson P."/>
        </authorList>
    </citation>
    <scope>NUCLEOTIDE SEQUENCE [LARGE SCALE GENOMIC DNA]</scope>
    <source>
        <strain>OS155 / ATCC BAA-1091</strain>
    </source>
</reference>
<accession>A3D3E2</accession>
<organism>
    <name type="scientific">Shewanella baltica (strain OS155 / ATCC BAA-1091)</name>
    <dbReference type="NCBI Taxonomy" id="325240"/>
    <lineage>
        <taxon>Bacteria</taxon>
        <taxon>Pseudomonadati</taxon>
        <taxon>Pseudomonadota</taxon>
        <taxon>Gammaproteobacteria</taxon>
        <taxon>Alteromonadales</taxon>
        <taxon>Shewanellaceae</taxon>
        <taxon>Shewanella</taxon>
    </lineage>
</organism>
<gene>
    <name evidence="1" type="primary">tolB</name>
    <name type="ordered locus">Sbal_1746</name>
</gene>
<evidence type="ECO:0000255" key="1">
    <source>
        <dbReference type="HAMAP-Rule" id="MF_00671"/>
    </source>
</evidence>
<name>TOLB_SHEB5</name>
<dbReference type="EMBL" id="CP000563">
    <property type="protein sequence ID" value="ABN61255.1"/>
    <property type="molecule type" value="Genomic_DNA"/>
</dbReference>
<dbReference type="RefSeq" id="WP_011846550.1">
    <property type="nucleotide sequence ID" value="NC_009052.1"/>
</dbReference>
<dbReference type="SMR" id="A3D3E2"/>
<dbReference type="STRING" id="325240.Sbal_1746"/>
<dbReference type="KEGG" id="sbl:Sbal_1746"/>
<dbReference type="HOGENOM" id="CLU_047123_0_0_6"/>
<dbReference type="OrthoDB" id="9802240at2"/>
<dbReference type="Proteomes" id="UP000001557">
    <property type="component" value="Chromosome"/>
</dbReference>
<dbReference type="GO" id="GO:0042597">
    <property type="term" value="C:periplasmic space"/>
    <property type="evidence" value="ECO:0007669"/>
    <property type="project" value="UniProtKB-SubCell"/>
</dbReference>
<dbReference type="GO" id="GO:0051301">
    <property type="term" value="P:cell division"/>
    <property type="evidence" value="ECO:0007669"/>
    <property type="project" value="UniProtKB-UniRule"/>
</dbReference>
<dbReference type="GO" id="GO:0017038">
    <property type="term" value="P:protein import"/>
    <property type="evidence" value="ECO:0007669"/>
    <property type="project" value="InterPro"/>
</dbReference>
<dbReference type="Gene3D" id="2.120.10.30">
    <property type="entry name" value="TolB, C-terminal domain"/>
    <property type="match status" value="1"/>
</dbReference>
<dbReference type="Gene3D" id="3.40.50.10070">
    <property type="entry name" value="TolB, N-terminal domain"/>
    <property type="match status" value="1"/>
</dbReference>
<dbReference type="HAMAP" id="MF_00671">
    <property type="entry name" value="TolB"/>
    <property type="match status" value="1"/>
</dbReference>
<dbReference type="InterPro" id="IPR011042">
    <property type="entry name" value="6-blade_b-propeller_TolB-like"/>
</dbReference>
<dbReference type="InterPro" id="IPR011659">
    <property type="entry name" value="PD40"/>
</dbReference>
<dbReference type="InterPro" id="IPR014167">
    <property type="entry name" value="Tol-Pal_TolB"/>
</dbReference>
<dbReference type="InterPro" id="IPR007195">
    <property type="entry name" value="TolB_N"/>
</dbReference>
<dbReference type="NCBIfam" id="TIGR02800">
    <property type="entry name" value="propeller_TolB"/>
    <property type="match status" value="1"/>
</dbReference>
<dbReference type="PANTHER" id="PTHR36842:SF1">
    <property type="entry name" value="PROTEIN TOLB"/>
    <property type="match status" value="1"/>
</dbReference>
<dbReference type="PANTHER" id="PTHR36842">
    <property type="entry name" value="PROTEIN TOLB HOMOLOG"/>
    <property type="match status" value="1"/>
</dbReference>
<dbReference type="Pfam" id="PF07676">
    <property type="entry name" value="PD40"/>
    <property type="match status" value="4"/>
</dbReference>
<dbReference type="Pfam" id="PF04052">
    <property type="entry name" value="TolB_N"/>
    <property type="match status" value="1"/>
</dbReference>
<dbReference type="SUPFAM" id="SSF52964">
    <property type="entry name" value="TolB, N-terminal domain"/>
    <property type="match status" value="1"/>
</dbReference>
<dbReference type="SUPFAM" id="SSF69304">
    <property type="entry name" value="Tricorn protease N-terminal domain"/>
    <property type="match status" value="1"/>
</dbReference>
<comment type="function">
    <text evidence="1">Part of the Tol-Pal system, which plays a role in outer membrane invagination during cell division and is important for maintaining outer membrane integrity.</text>
</comment>
<comment type="subunit">
    <text evidence="1">The Tol-Pal system is composed of five core proteins: the inner membrane proteins TolA, TolQ and TolR, the periplasmic protein TolB and the outer membrane protein Pal. They form a network linking the inner and outer membranes and the peptidoglycan layer.</text>
</comment>
<comment type="subcellular location">
    <subcellularLocation>
        <location evidence="1">Periplasm</location>
    </subcellularLocation>
</comment>
<comment type="similarity">
    <text evidence="1">Belongs to the TolB family.</text>
</comment>
<feature type="signal peptide" evidence="1">
    <location>
        <begin position="1"/>
        <end position="21"/>
    </location>
</feature>
<feature type="chain" id="PRO_5000224481" description="Tol-Pal system protein TolB" evidence="1">
    <location>
        <begin position="22"/>
        <end position="442"/>
    </location>
</feature>
<sequence>MRILAKWLALAVLLCTTPAKAALDIVITEGVDAARPIAVMPFVWQGSGAAPQAIADVVMSDLVRSGTFKPLDELGLPQRNIGTAAQFQANSWSSVGAEALVLGTVKPYGTDQYLVSFDLIDLVKAQNQALKGPVSATEFLMDSRQTVISAAQFRQYGHRISDIVYEKLTGIRGAFLTRISYVVVNHTQKAPYQLMVADYDGVNEQMLLRSPEPLMSPTWSPDGRRLAYVSFENKKAEIFVQDLYTQVRTKVSSFPGINGAPAFSPDGKSLAITLSKDGQPEIYIIDIATKAIKRITNHYAIDTEPSWYPDGKSLIFTSERGGRPQIYRVELSSGKVSRETFEGEWNLGGSITPDGRSMIFVNRTNGKFNIARMDLSTRFMQVLTSTRLDESPSVAPNGTMVIYGTTYQGKQVLAAVSTDGRFKARLPAGQGEVKSPSWSPFL</sequence>
<proteinExistence type="inferred from homology"/>
<keyword id="KW-0131">Cell cycle</keyword>
<keyword id="KW-0132">Cell division</keyword>
<keyword id="KW-0574">Periplasm</keyword>
<keyword id="KW-1185">Reference proteome</keyword>
<keyword id="KW-0732">Signal</keyword>
<protein>
    <recommendedName>
        <fullName evidence="1">Tol-Pal system protein TolB</fullName>
    </recommendedName>
</protein>